<evidence type="ECO:0000250" key="1"/>
<evidence type="ECO:0000250" key="2">
    <source>
        <dbReference type="UniProtKB" id="Q867X0"/>
    </source>
</evidence>
<evidence type="ECO:0000305" key="3"/>
<reference key="1">
    <citation type="journal article" date="1999" name="Nature">
        <title>Sequence and analysis of chromosome 2 of the plant Arabidopsis thaliana.</title>
        <authorList>
            <person name="Lin X."/>
            <person name="Kaul S."/>
            <person name="Rounsley S.D."/>
            <person name="Shea T.P."/>
            <person name="Benito M.-I."/>
            <person name="Town C.D."/>
            <person name="Fujii C.Y."/>
            <person name="Mason T.M."/>
            <person name="Bowman C.L."/>
            <person name="Barnstead M.E."/>
            <person name="Feldblyum T.V."/>
            <person name="Buell C.R."/>
            <person name="Ketchum K.A."/>
            <person name="Lee J.J."/>
            <person name="Ronning C.M."/>
            <person name="Koo H.L."/>
            <person name="Moffat K.S."/>
            <person name="Cronin L.A."/>
            <person name="Shen M."/>
            <person name="Pai G."/>
            <person name="Van Aken S."/>
            <person name="Umayam L."/>
            <person name="Tallon L.J."/>
            <person name="Gill J.E."/>
            <person name="Adams M.D."/>
            <person name="Carrera A.J."/>
            <person name="Creasy T.H."/>
            <person name="Goodman H.M."/>
            <person name="Somerville C.R."/>
            <person name="Copenhaver G.P."/>
            <person name="Preuss D."/>
            <person name="Nierman W.C."/>
            <person name="White O."/>
            <person name="Eisen J.A."/>
            <person name="Salzberg S.L."/>
            <person name="Fraser C.M."/>
            <person name="Venter J.C."/>
        </authorList>
    </citation>
    <scope>NUCLEOTIDE SEQUENCE [LARGE SCALE GENOMIC DNA]</scope>
    <source>
        <strain>cv. Columbia</strain>
    </source>
</reference>
<reference key="2">
    <citation type="journal article" date="2017" name="Plant J.">
        <title>Araport11: a complete reannotation of the Arabidopsis thaliana reference genome.</title>
        <authorList>
            <person name="Cheng C.Y."/>
            <person name="Krishnakumar V."/>
            <person name="Chan A.P."/>
            <person name="Thibaud-Nissen F."/>
            <person name="Schobel S."/>
            <person name="Town C.D."/>
        </authorList>
    </citation>
    <scope>GENOME REANNOTATION</scope>
    <source>
        <strain>cv. Columbia</strain>
    </source>
</reference>
<reference key="3">
    <citation type="journal article" date="2003" name="Science">
        <title>Empirical analysis of transcriptional activity in the Arabidopsis genome.</title>
        <authorList>
            <person name="Yamada K."/>
            <person name="Lim J."/>
            <person name="Dale J.M."/>
            <person name="Chen H."/>
            <person name="Shinn P."/>
            <person name="Palm C.J."/>
            <person name="Southwick A.M."/>
            <person name="Wu H.C."/>
            <person name="Kim C.J."/>
            <person name="Nguyen M."/>
            <person name="Pham P.K."/>
            <person name="Cheuk R.F."/>
            <person name="Karlin-Newmann G."/>
            <person name="Liu S.X."/>
            <person name="Lam B."/>
            <person name="Sakano H."/>
            <person name="Wu T."/>
            <person name="Yu G."/>
            <person name="Miranda M."/>
            <person name="Quach H.L."/>
            <person name="Tripp M."/>
            <person name="Chang C.H."/>
            <person name="Lee J.M."/>
            <person name="Toriumi M.J."/>
            <person name="Chan M.M."/>
            <person name="Tang C.C."/>
            <person name="Onodera C.S."/>
            <person name="Deng J.M."/>
            <person name="Akiyama K."/>
            <person name="Ansari Y."/>
            <person name="Arakawa T."/>
            <person name="Banh J."/>
            <person name="Banno F."/>
            <person name="Bowser L."/>
            <person name="Brooks S.Y."/>
            <person name="Carninci P."/>
            <person name="Chao Q."/>
            <person name="Choy N."/>
            <person name="Enju A."/>
            <person name="Goldsmith A.D."/>
            <person name="Gurjal M."/>
            <person name="Hansen N.F."/>
            <person name="Hayashizaki Y."/>
            <person name="Johnson-Hopson C."/>
            <person name="Hsuan V.W."/>
            <person name="Iida K."/>
            <person name="Karnes M."/>
            <person name="Khan S."/>
            <person name="Koesema E."/>
            <person name="Ishida J."/>
            <person name="Jiang P.X."/>
            <person name="Jones T."/>
            <person name="Kawai J."/>
            <person name="Kamiya A."/>
            <person name="Meyers C."/>
            <person name="Nakajima M."/>
            <person name="Narusaka M."/>
            <person name="Seki M."/>
            <person name="Sakurai T."/>
            <person name="Satou M."/>
            <person name="Tamse R."/>
            <person name="Vaysberg M."/>
            <person name="Wallender E.K."/>
            <person name="Wong C."/>
            <person name="Yamamura Y."/>
            <person name="Yuan S."/>
            <person name="Shinozaki K."/>
            <person name="Davis R.W."/>
            <person name="Theologis A."/>
            <person name="Ecker J.R."/>
        </authorList>
    </citation>
    <scope>NUCLEOTIDE SEQUENCE [LARGE SCALE MRNA] (ISOFORM 1)</scope>
    <source>
        <strain>cv. Columbia</strain>
    </source>
</reference>
<feature type="chain" id="PRO_0000288792" description="Probable poly(ADP-ribose) glycohydrolase 2">
    <location>
        <begin position="1"/>
        <end position="522"/>
    </location>
</feature>
<feature type="splice variant" id="VSP_025763" description="In isoform 2." evidence="3">
    <original>S</original>
    <variation>STKIKFVFAKQ</variation>
    <location>
        <position position="399"/>
    </location>
</feature>
<protein>
    <recommendedName>
        <fullName>Probable poly(ADP-ribose) glycohydrolase 2</fullName>
        <ecNumber evidence="2">3.2.1.143</ecNumber>
    </recommendedName>
</protein>
<keyword id="KW-0025">Alternative splicing</keyword>
<keyword id="KW-0378">Hydrolase</keyword>
<keyword id="KW-1185">Reference proteome</keyword>
<gene>
    <name type="primary">PARG2</name>
    <name type="ordered locus">At2g31865</name>
    <name type="ORF">F20M17</name>
</gene>
<proteinExistence type="evidence at transcript level"/>
<organism>
    <name type="scientific">Arabidopsis thaliana</name>
    <name type="common">Mouse-ear cress</name>
    <dbReference type="NCBI Taxonomy" id="3702"/>
    <lineage>
        <taxon>Eukaryota</taxon>
        <taxon>Viridiplantae</taxon>
        <taxon>Streptophyta</taxon>
        <taxon>Embryophyta</taxon>
        <taxon>Tracheophyta</taxon>
        <taxon>Spermatophyta</taxon>
        <taxon>Magnoliopsida</taxon>
        <taxon>eudicotyledons</taxon>
        <taxon>Gunneridae</taxon>
        <taxon>Pentapetalae</taxon>
        <taxon>rosids</taxon>
        <taxon>malvids</taxon>
        <taxon>Brassicales</taxon>
        <taxon>Brassicaceae</taxon>
        <taxon>Camelineae</taxon>
        <taxon>Arabidopsis</taxon>
    </lineage>
</organism>
<comment type="function">
    <text evidence="1">Poly(ADP-ribose) synthesized after DNA damage is only present transiently and is rapidly degraded by poly(ADP-ribose) glycohydrolase.</text>
</comment>
<comment type="catalytic activity">
    <reaction evidence="2">
        <text>[(1''-&gt;2')-ADP-alpha-D-ribose](n) + H2O = [(1''-&gt;2')-ADP-alpha-D-ribose](n-1) + ADP-D-ribose</text>
        <dbReference type="Rhea" id="RHEA:52216"/>
        <dbReference type="Rhea" id="RHEA-COMP:16922"/>
        <dbReference type="Rhea" id="RHEA-COMP:16923"/>
        <dbReference type="ChEBI" id="CHEBI:15377"/>
        <dbReference type="ChEBI" id="CHEBI:57967"/>
        <dbReference type="ChEBI" id="CHEBI:142512"/>
        <dbReference type="EC" id="3.2.1.143"/>
    </reaction>
</comment>
<comment type="alternative products">
    <event type="alternative splicing"/>
    <isoform>
        <id>Q8VYA1-1</id>
        <name>1</name>
        <sequence type="displayed"/>
    </isoform>
    <isoform>
        <id>Q8VYA1-2</id>
        <name>2</name>
        <sequence type="described" ref="VSP_025763"/>
    </isoform>
</comment>
<comment type="similarity">
    <text evidence="3">Belongs to the poly(ADP-ribose) glycohydrolase family.</text>
</comment>
<comment type="caution">
    <text evidence="3">Was previously assigned to At2g31870.</text>
</comment>
<dbReference type="EC" id="3.2.1.143" evidence="2"/>
<dbReference type="EMBL" id="AC006533">
    <property type="status" value="NOT_ANNOTATED_CDS"/>
    <property type="molecule type" value="Genomic_DNA"/>
</dbReference>
<dbReference type="EMBL" id="CP002685">
    <property type="protein sequence ID" value="AEC08595.1"/>
    <property type="molecule type" value="Genomic_DNA"/>
</dbReference>
<dbReference type="EMBL" id="CP002685">
    <property type="protein sequence ID" value="AEC08596.1"/>
    <property type="molecule type" value="Genomic_DNA"/>
</dbReference>
<dbReference type="EMBL" id="AY072330">
    <property type="protein sequence ID" value="AAL61937.1"/>
    <property type="molecule type" value="mRNA"/>
</dbReference>
<dbReference type="EMBL" id="BT010379">
    <property type="protein sequence ID" value="AAQ56822.1"/>
    <property type="molecule type" value="mRNA"/>
</dbReference>
<dbReference type="RefSeq" id="NP_850175.1">
    <molecule id="Q8VYA1-1"/>
    <property type="nucleotide sequence ID" value="NM_179844.3"/>
</dbReference>
<dbReference type="RefSeq" id="NP_973578.1">
    <molecule id="Q8VYA1-2"/>
    <property type="nucleotide sequence ID" value="NM_201849.3"/>
</dbReference>
<dbReference type="SMR" id="Q8VYA1"/>
<dbReference type="BioGRID" id="3091">
    <property type="interactions" value="3"/>
</dbReference>
<dbReference type="FunCoup" id="Q8VYA1">
    <property type="interactions" value="638"/>
</dbReference>
<dbReference type="STRING" id="3702.Q8VYA1"/>
<dbReference type="iPTMnet" id="Q8VYA1"/>
<dbReference type="PaxDb" id="3702-AT2G31865.2"/>
<dbReference type="ProteomicsDB" id="236275">
    <molecule id="Q8VYA1-1"/>
</dbReference>
<dbReference type="EnsemblPlants" id="AT2G31865.1">
    <molecule id="Q8VYA1-1"/>
    <property type="protein sequence ID" value="AT2G31865.1"/>
    <property type="gene ID" value="AT2G31865"/>
</dbReference>
<dbReference type="EnsemblPlants" id="AT2G31865.2">
    <molecule id="Q8VYA1-2"/>
    <property type="protein sequence ID" value="AT2G31865.2"/>
    <property type="gene ID" value="AT2G31865"/>
</dbReference>
<dbReference type="GeneID" id="817744"/>
<dbReference type="Gramene" id="AT2G31865.1">
    <molecule id="Q8VYA1-1"/>
    <property type="protein sequence ID" value="AT2G31865.1"/>
    <property type="gene ID" value="AT2G31865"/>
</dbReference>
<dbReference type="Gramene" id="AT2G31865.2">
    <molecule id="Q8VYA1-2"/>
    <property type="protein sequence ID" value="AT2G31865.2"/>
    <property type="gene ID" value="AT2G31865"/>
</dbReference>
<dbReference type="KEGG" id="ath:AT2G31865"/>
<dbReference type="Araport" id="AT2G31865"/>
<dbReference type="TAIR" id="AT2G31865">
    <property type="gene designation" value="PARG2"/>
</dbReference>
<dbReference type="eggNOG" id="KOG2064">
    <property type="taxonomic scope" value="Eukaryota"/>
</dbReference>
<dbReference type="HOGENOM" id="CLU_013388_0_0_1"/>
<dbReference type="InParanoid" id="Q8VYA1"/>
<dbReference type="OMA" id="RICRCMP"/>
<dbReference type="OrthoDB" id="1937899at2759"/>
<dbReference type="PhylomeDB" id="Q8VYA1"/>
<dbReference type="PRO" id="PR:Q8VYA1"/>
<dbReference type="Proteomes" id="UP000006548">
    <property type="component" value="Chromosome 2"/>
</dbReference>
<dbReference type="ExpressionAtlas" id="Q8VYA1">
    <property type="expression patterns" value="baseline and differential"/>
</dbReference>
<dbReference type="GO" id="GO:0004649">
    <property type="term" value="F:poly(ADP-ribose) glycohydrolase activity"/>
    <property type="evidence" value="ECO:0007669"/>
    <property type="project" value="UniProtKB-EC"/>
</dbReference>
<dbReference type="GO" id="GO:0005975">
    <property type="term" value="P:carbohydrate metabolic process"/>
    <property type="evidence" value="ECO:0007669"/>
    <property type="project" value="InterPro"/>
</dbReference>
<dbReference type="GO" id="GO:0050832">
    <property type="term" value="P:defense response to fungus"/>
    <property type="evidence" value="ECO:0000315"/>
    <property type="project" value="TAIR"/>
</dbReference>
<dbReference type="GO" id="GO:0006974">
    <property type="term" value="P:DNA damage response"/>
    <property type="evidence" value="ECO:0000315"/>
    <property type="project" value="TAIR"/>
</dbReference>
<dbReference type="GO" id="GO:0006282">
    <property type="term" value="P:regulation of DNA repair"/>
    <property type="evidence" value="ECO:0007669"/>
    <property type="project" value="InterPro"/>
</dbReference>
<dbReference type="InterPro" id="IPR046372">
    <property type="entry name" value="PARG_cat_C"/>
</dbReference>
<dbReference type="InterPro" id="IPR048362">
    <property type="entry name" value="PARG_helical"/>
</dbReference>
<dbReference type="InterPro" id="IPR007724">
    <property type="entry name" value="Poly_GlycHdrlase"/>
</dbReference>
<dbReference type="PANTHER" id="PTHR12837">
    <property type="entry name" value="POLY ADP-RIBOSE GLYCOHYDROLASE"/>
    <property type="match status" value="1"/>
</dbReference>
<dbReference type="PANTHER" id="PTHR12837:SF7">
    <property type="entry name" value="POLY(ADP-RIBOSE) GLYCOHYDROLASE 2-RELATED"/>
    <property type="match status" value="1"/>
</dbReference>
<dbReference type="Pfam" id="PF05028">
    <property type="entry name" value="PARG_cat_C"/>
    <property type="match status" value="1"/>
</dbReference>
<dbReference type="Pfam" id="PF20811">
    <property type="entry name" value="PARG_cat_N"/>
    <property type="match status" value="1"/>
</dbReference>
<name>PARG2_ARATH</name>
<accession>Q8VYA1</accession>
<accession>Q3EBQ6</accession>
<sequence length="522" mass="58943">MELRADLRSILQYLPLVAQSSSLVWPPSVEEELQTISRGPSESMVNSGEALALHITNMRKSLSLNASDLAPYALQGYGLFFDKKISREESANFFGEVVPALCRLLLQLPSMLEKHYQKADHVLDGVKSGLRLLGPQEAGIVLLSQELIAALLACSFFCLFPEVDRSLKNLQGINFSGLFSFPYMRHCTKQENKIKCLIHYFGRICRWMPTGFVSFERKILPLEYHPHFVSYPKADSWANSVTPLCSIEIHTSGAIEDQPCEALEVDFADEYFGGLTLSYDTLQEEIRFVINPELIAGMIFLPRMDANEAIEIVGVERFSGYTGYGPSFQYAGDYTDNKDLDIFRRRKTRVIAIDAMPDPGMGQYKLDALIREVNKAFSGYMHQCKYNIDVKHDPEASSSHVPLTSDSASQVIESSHRWCIDHEEKKIGVATGNWGCGVFGGDPELKIMLQWLAISQSGRPFMSYYTFGLQALQNLNQVIEMVALQEMTVGDLWKKLVEYSSERLSRRTWLGFFSWLMTSLST</sequence>